<comment type="function">
    <text evidence="2">Catalyzes the formation of N(7)-methylguanine at position 46 (m7G46) in tRNA.</text>
</comment>
<comment type="catalytic activity">
    <reaction evidence="2">
        <text>guanosine(46) in tRNA + S-adenosyl-L-methionine = N(7)-methylguanosine(46) in tRNA + S-adenosyl-L-homocysteine</text>
        <dbReference type="Rhea" id="RHEA:42708"/>
        <dbReference type="Rhea" id="RHEA-COMP:10188"/>
        <dbReference type="Rhea" id="RHEA-COMP:10189"/>
        <dbReference type="ChEBI" id="CHEBI:57856"/>
        <dbReference type="ChEBI" id="CHEBI:59789"/>
        <dbReference type="ChEBI" id="CHEBI:74269"/>
        <dbReference type="ChEBI" id="CHEBI:74480"/>
        <dbReference type="EC" id="2.1.1.33"/>
    </reaction>
</comment>
<comment type="pathway">
    <text evidence="2">tRNA modification; N(7)-methylguanine-tRNA biosynthesis.</text>
</comment>
<comment type="similarity">
    <text evidence="2">Belongs to the class I-like SAM-binding methyltransferase superfamily. TrmB family.</text>
</comment>
<evidence type="ECO:0000250" key="1"/>
<evidence type="ECO:0000255" key="2">
    <source>
        <dbReference type="HAMAP-Rule" id="MF_01057"/>
    </source>
</evidence>
<feature type="chain" id="PRO_1000136340" description="tRNA (guanine-N(7)-)-methyltransferase">
    <location>
        <begin position="1"/>
        <end position="217"/>
    </location>
</feature>
<feature type="active site" evidence="1">
    <location>
        <position position="118"/>
    </location>
</feature>
<feature type="binding site" evidence="2">
    <location>
        <position position="44"/>
    </location>
    <ligand>
        <name>S-adenosyl-L-methionine</name>
        <dbReference type="ChEBI" id="CHEBI:59789"/>
    </ligand>
</feature>
<feature type="binding site" evidence="2">
    <location>
        <position position="69"/>
    </location>
    <ligand>
        <name>S-adenosyl-L-methionine</name>
        <dbReference type="ChEBI" id="CHEBI:59789"/>
    </ligand>
</feature>
<feature type="binding site" evidence="2">
    <location>
        <position position="96"/>
    </location>
    <ligand>
        <name>S-adenosyl-L-methionine</name>
        <dbReference type="ChEBI" id="CHEBI:59789"/>
    </ligand>
</feature>
<feature type="binding site" evidence="2">
    <location>
        <position position="118"/>
    </location>
    <ligand>
        <name>S-adenosyl-L-methionine</name>
        <dbReference type="ChEBI" id="CHEBI:59789"/>
    </ligand>
</feature>
<feature type="binding site" evidence="2">
    <location>
        <position position="122"/>
    </location>
    <ligand>
        <name>substrate</name>
    </ligand>
</feature>
<feature type="binding site" evidence="2">
    <location>
        <position position="154"/>
    </location>
    <ligand>
        <name>substrate</name>
    </ligand>
</feature>
<feature type="binding site" evidence="2">
    <location>
        <begin position="191"/>
        <end position="194"/>
    </location>
    <ligand>
        <name>substrate</name>
    </ligand>
</feature>
<proteinExistence type="inferred from homology"/>
<keyword id="KW-0489">Methyltransferase</keyword>
<keyword id="KW-0949">S-adenosyl-L-methionine</keyword>
<keyword id="KW-0808">Transferase</keyword>
<keyword id="KW-0819">tRNA processing</keyword>
<sequence length="217" mass="25573">MRLRHKPYAMDRINEYSHIVIGNPEERAGSWKEVFGNEQPIHIEVGTGRGRFMYDMAKANPHINYIGIEKFTSVVVDALDKLIEEELPNLKLINKDAEDLTVFFAKGEIDRVYLNFSDPWPKKRHTKRRLTYKTFLRNYEEVLVEGGEIHFKTDNQGLFEYSLMSMAEYGMLLTYLSLDLHNSDFEGNIMTEYEEKFSSKGHRIYRVEAKYRTEPMQ</sequence>
<reference key="1">
    <citation type="submission" date="2008-10" db="EMBL/GenBank/DDBJ databases">
        <title>Genome sequence of Bacillus cereus B4264.</title>
        <authorList>
            <person name="Dodson R.J."/>
            <person name="Durkin A.S."/>
            <person name="Rosovitz M.J."/>
            <person name="Rasko D.A."/>
            <person name="Hoffmaster A."/>
            <person name="Ravel J."/>
            <person name="Sutton G."/>
        </authorList>
    </citation>
    <scope>NUCLEOTIDE SEQUENCE [LARGE SCALE GENOMIC DNA]</scope>
    <source>
        <strain>B4264</strain>
    </source>
</reference>
<accession>B7H758</accession>
<gene>
    <name evidence="2" type="primary">trmB</name>
    <name type="ordered locus">BCB4264_A4811</name>
</gene>
<name>TRMB_BACC4</name>
<protein>
    <recommendedName>
        <fullName evidence="2">tRNA (guanine-N(7)-)-methyltransferase</fullName>
        <ecNumber evidence="2">2.1.1.33</ecNumber>
    </recommendedName>
    <alternativeName>
        <fullName evidence="2">tRNA (guanine(46)-N(7))-methyltransferase</fullName>
    </alternativeName>
    <alternativeName>
        <fullName evidence="2">tRNA(m7G46)-methyltransferase</fullName>
    </alternativeName>
</protein>
<organism>
    <name type="scientific">Bacillus cereus (strain B4264)</name>
    <dbReference type="NCBI Taxonomy" id="405532"/>
    <lineage>
        <taxon>Bacteria</taxon>
        <taxon>Bacillati</taxon>
        <taxon>Bacillota</taxon>
        <taxon>Bacilli</taxon>
        <taxon>Bacillales</taxon>
        <taxon>Bacillaceae</taxon>
        <taxon>Bacillus</taxon>
        <taxon>Bacillus cereus group</taxon>
    </lineage>
</organism>
<dbReference type="EC" id="2.1.1.33" evidence="2"/>
<dbReference type="EMBL" id="CP001176">
    <property type="protein sequence ID" value="ACK61400.1"/>
    <property type="molecule type" value="Genomic_DNA"/>
</dbReference>
<dbReference type="RefSeq" id="WP_001239385.1">
    <property type="nucleotide sequence ID" value="NZ_VEHB01000005.1"/>
</dbReference>
<dbReference type="SMR" id="B7H758"/>
<dbReference type="KEGG" id="bcb:BCB4264_A4811"/>
<dbReference type="HOGENOM" id="CLU_050910_2_1_9"/>
<dbReference type="UniPathway" id="UPA00989"/>
<dbReference type="Proteomes" id="UP000007096">
    <property type="component" value="Chromosome"/>
</dbReference>
<dbReference type="GO" id="GO:0043527">
    <property type="term" value="C:tRNA methyltransferase complex"/>
    <property type="evidence" value="ECO:0007669"/>
    <property type="project" value="TreeGrafter"/>
</dbReference>
<dbReference type="GO" id="GO:0008176">
    <property type="term" value="F:tRNA (guanine(46)-N7)-methyltransferase activity"/>
    <property type="evidence" value="ECO:0007669"/>
    <property type="project" value="UniProtKB-UniRule"/>
</dbReference>
<dbReference type="CDD" id="cd02440">
    <property type="entry name" value="AdoMet_MTases"/>
    <property type="match status" value="1"/>
</dbReference>
<dbReference type="FunFam" id="3.40.50.150:FF:000035">
    <property type="entry name" value="tRNA (guanine-N(7)-)-methyltransferase"/>
    <property type="match status" value="1"/>
</dbReference>
<dbReference type="Gene3D" id="3.40.50.150">
    <property type="entry name" value="Vaccinia Virus protein VP39"/>
    <property type="match status" value="1"/>
</dbReference>
<dbReference type="HAMAP" id="MF_01057">
    <property type="entry name" value="tRNA_methyltr_TrmB"/>
    <property type="match status" value="1"/>
</dbReference>
<dbReference type="InterPro" id="IPR029063">
    <property type="entry name" value="SAM-dependent_MTases_sf"/>
</dbReference>
<dbReference type="InterPro" id="IPR003358">
    <property type="entry name" value="tRNA_(Gua-N-7)_MeTrfase_Trmb"/>
</dbReference>
<dbReference type="InterPro" id="IPR055361">
    <property type="entry name" value="tRNA_methyltr_TrmB_bact"/>
</dbReference>
<dbReference type="NCBIfam" id="NF001080">
    <property type="entry name" value="PRK00121.2-2"/>
    <property type="match status" value="1"/>
</dbReference>
<dbReference type="NCBIfam" id="TIGR00091">
    <property type="entry name" value="tRNA (guanosine(46)-N7)-methyltransferase TrmB"/>
    <property type="match status" value="1"/>
</dbReference>
<dbReference type="PANTHER" id="PTHR23417">
    <property type="entry name" value="3-DEOXY-D-MANNO-OCTULOSONIC-ACID TRANSFERASE/TRNA GUANINE-N 7 - -METHYLTRANSFERASE"/>
    <property type="match status" value="1"/>
</dbReference>
<dbReference type="PANTHER" id="PTHR23417:SF14">
    <property type="entry name" value="PENTACOTRIPEPTIDE-REPEAT REGION OF PRORP DOMAIN-CONTAINING PROTEIN"/>
    <property type="match status" value="1"/>
</dbReference>
<dbReference type="Pfam" id="PF02390">
    <property type="entry name" value="Methyltransf_4"/>
    <property type="match status" value="1"/>
</dbReference>
<dbReference type="SUPFAM" id="SSF53335">
    <property type="entry name" value="S-adenosyl-L-methionine-dependent methyltransferases"/>
    <property type="match status" value="1"/>
</dbReference>
<dbReference type="PROSITE" id="PS51625">
    <property type="entry name" value="SAM_MT_TRMB"/>
    <property type="match status" value="1"/>
</dbReference>